<evidence type="ECO:0000250" key="1">
    <source>
        <dbReference type="UniProtKB" id="Q0WPU1"/>
    </source>
</evidence>
<evidence type="ECO:0000255" key="2"/>
<evidence type="ECO:0000255" key="3">
    <source>
        <dbReference type="PROSITE-ProRule" id="PRU00503"/>
    </source>
</evidence>
<evidence type="ECO:0000255" key="4">
    <source>
        <dbReference type="PROSITE-ProRule" id="PRU00782"/>
    </source>
</evidence>
<evidence type="ECO:0000255" key="5">
    <source>
        <dbReference type="PROSITE-ProRule" id="PRU01190"/>
    </source>
</evidence>
<evidence type="ECO:0000269" key="6">
    <source>
    </source>
</evidence>
<evidence type="ECO:0000303" key="7">
    <source>
    </source>
</evidence>
<evidence type="ECO:0000305" key="8"/>
<evidence type="ECO:0000305" key="9">
    <source>
    </source>
</evidence>
<evidence type="ECO:0000312" key="10">
    <source>
        <dbReference type="EMBL" id="AFW64277.1"/>
    </source>
</evidence>
<dbReference type="EMBL" id="CM000780">
    <property type="protein sequence ID" value="AFW64277.1"/>
    <property type="molecule type" value="Genomic_DNA"/>
</dbReference>
<dbReference type="EMBL" id="CM000780">
    <property type="protein sequence ID" value="AFW64278.1"/>
    <property type="molecule type" value="Genomic_DNA"/>
</dbReference>
<dbReference type="EMBL" id="CM000780">
    <property type="protein sequence ID" value="AFW64276.1"/>
    <property type="molecule type" value="Genomic_DNA"/>
</dbReference>
<dbReference type="SMR" id="K7U9N8"/>
<dbReference type="STRING" id="4577.K7U9N8"/>
<dbReference type="PaxDb" id="4577-GRMZM2G449909_P01"/>
<dbReference type="EnsemblPlants" id="Zm00001eb193160_T001">
    <molecule id="K7U9N8-2"/>
    <property type="protein sequence ID" value="Zm00001eb193160_P001"/>
    <property type="gene ID" value="Zm00001eb193160"/>
</dbReference>
<dbReference type="Gramene" id="Zm00001eb193160_T001">
    <molecule id="K7U9N8-2"/>
    <property type="protein sequence ID" value="Zm00001eb193160_P001"/>
    <property type="gene ID" value="Zm00001eb193160"/>
</dbReference>
<dbReference type="eggNOG" id="KOG0160">
    <property type="taxonomic scope" value="Eukaryota"/>
</dbReference>
<dbReference type="InParanoid" id="K7U9N8"/>
<dbReference type="Proteomes" id="UP000007305">
    <property type="component" value="Chromosome 4"/>
</dbReference>
<dbReference type="ExpressionAtlas" id="K7U9N8">
    <property type="expression patterns" value="baseline and differential"/>
</dbReference>
<dbReference type="GO" id="GO:0015629">
    <property type="term" value="C:actin cytoskeleton"/>
    <property type="evidence" value="ECO:0000318"/>
    <property type="project" value="GO_Central"/>
</dbReference>
<dbReference type="GO" id="GO:0005737">
    <property type="term" value="C:cytoplasm"/>
    <property type="evidence" value="ECO:0000318"/>
    <property type="project" value="GO_Central"/>
</dbReference>
<dbReference type="GO" id="GO:0016020">
    <property type="term" value="C:membrane"/>
    <property type="evidence" value="ECO:0000318"/>
    <property type="project" value="GO_Central"/>
</dbReference>
<dbReference type="GO" id="GO:0016459">
    <property type="term" value="C:myosin complex"/>
    <property type="evidence" value="ECO:0007669"/>
    <property type="project" value="UniProtKB-KW"/>
</dbReference>
<dbReference type="GO" id="GO:0051015">
    <property type="term" value="F:actin filament binding"/>
    <property type="evidence" value="ECO:0000318"/>
    <property type="project" value="GO_Central"/>
</dbReference>
<dbReference type="GO" id="GO:0005524">
    <property type="term" value="F:ATP binding"/>
    <property type="evidence" value="ECO:0007669"/>
    <property type="project" value="UniProtKB-KW"/>
</dbReference>
<dbReference type="GO" id="GO:0005516">
    <property type="term" value="F:calmodulin binding"/>
    <property type="evidence" value="ECO:0007669"/>
    <property type="project" value="UniProtKB-KW"/>
</dbReference>
<dbReference type="GO" id="GO:0000146">
    <property type="term" value="F:microfilament motor activity"/>
    <property type="evidence" value="ECO:0000318"/>
    <property type="project" value="GO_Central"/>
</dbReference>
<dbReference type="GO" id="GO:0007015">
    <property type="term" value="P:actin filament organization"/>
    <property type="evidence" value="ECO:0000318"/>
    <property type="project" value="GO_Central"/>
</dbReference>
<dbReference type="GO" id="GO:0030048">
    <property type="term" value="P:actin filament-based movement"/>
    <property type="evidence" value="ECO:0007669"/>
    <property type="project" value="UniProtKB-ARBA"/>
</dbReference>
<dbReference type="CDD" id="cd15475">
    <property type="entry name" value="MyosinXI_CBD"/>
    <property type="match status" value="1"/>
</dbReference>
<dbReference type="CDD" id="cd01384">
    <property type="entry name" value="MYSc_Myo11"/>
    <property type="match status" value="1"/>
</dbReference>
<dbReference type="FunFam" id="1.10.10.820:FF:000001">
    <property type="entry name" value="Myosin heavy chain"/>
    <property type="match status" value="1"/>
</dbReference>
<dbReference type="Gene3D" id="1.10.10.820">
    <property type="match status" value="1"/>
</dbReference>
<dbReference type="Gene3D" id="1.20.5.190">
    <property type="match status" value="3"/>
</dbReference>
<dbReference type="Gene3D" id="1.20.58.530">
    <property type="match status" value="1"/>
</dbReference>
<dbReference type="Gene3D" id="3.30.70.1590">
    <property type="match status" value="1"/>
</dbReference>
<dbReference type="Gene3D" id="3.40.850.10">
    <property type="entry name" value="Kinesin motor domain"/>
    <property type="match status" value="1"/>
</dbReference>
<dbReference type="Gene3D" id="1.20.120.720">
    <property type="entry name" value="Myosin VI head, motor domain, U50 subdomain"/>
    <property type="match status" value="1"/>
</dbReference>
<dbReference type="InterPro" id="IPR002710">
    <property type="entry name" value="Dilute_dom"/>
</dbReference>
<dbReference type="InterPro" id="IPR000048">
    <property type="entry name" value="IQ_motif_EF-hand-BS"/>
</dbReference>
<dbReference type="InterPro" id="IPR036961">
    <property type="entry name" value="Kinesin_motor_dom_sf"/>
</dbReference>
<dbReference type="InterPro" id="IPR001609">
    <property type="entry name" value="Myosin_head_motor_dom-like"/>
</dbReference>
<dbReference type="InterPro" id="IPR004009">
    <property type="entry name" value="Myosin_N"/>
</dbReference>
<dbReference type="InterPro" id="IPR037975">
    <property type="entry name" value="MyosinXI_CBD"/>
</dbReference>
<dbReference type="InterPro" id="IPR036018">
    <property type="entry name" value="MYSc_Myo11"/>
</dbReference>
<dbReference type="InterPro" id="IPR027417">
    <property type="entry name" value="P-loop_NTPase"/>
</dbReference>
<dbReference type="PANTHER" id="PTHR13140">
    <property type="entry name" value="MYOSIN"/>
    <property type="match status" value="1"/>
</dbReference>
<dbReference type="PANTHER" id="PTHR13140:SF781">
    <property type="entry name" value="MYOSIN-15"/>
    <property type="match status" value="1"/>
</dbReference>
<dbReference type="Pfam" id="PF01843">
    <property type="entry name" value="DIL"/>
    <property type="match status" value="1"/>
</dbReference>
<dbReference type="Pfam" id="PF00612">
    <property type="entry name" value="IQ"/>
    <property type="match status" value="5"/>
</dbReference>
<dbReference type="Pfam" id="PF00063">
    <property type="entry name" value="Myosin_head"/>
    <property type="match status" value="1"/>
</dbReference>
<dbReference type="PRINTS" id="PR00193">
    <property type="entry name" value="MYOSINHEAVY"/>
</dbReference>
<dbReference type="SMART" id="SM01132">
    <property type="entry name" value="DIL"/>
    <property type="match status" value="1"/>
</dbReference>
<dbReference type="SMART" id="SM00015">
    <property type="entry name" value="IQ"/>
    <property type="match status" value="6"/>
</dbReference>
<dbReference type="SMART" id="SM00242">
    <property type="entry name" value="MYSc"/>
    <property type="match status" value="1"/>
</dbReference>
<dbReference type="SUPFAM" id="SSF52540">
    <property type="entry name" value="P-loop containing nucleoside triphosphate hydrolases"/>
    <property type="match status" value="2"/>
</dbReference>
<dbReference type="PROSITE" id="PS51126">
    <property type="entry name" value="DILUTE"/>
    <property type="match status" value="1"/>
</dbReference>
<dbReference type="PROSITE" id="PS50096">
    <property type="entry name" value="IQ"/>
    <property type="match status" value="4"/>
</dbReference>
<dbReference type="PROSITE" id="PS51456">
    <property type="entry name" value="MYOSIN_MOTOR"/>
    <property type="match status" value="1"/>
</dbReference>
<dbReference type="PROSITE" id="PS51844">
    <property type="entry name" value="SH3_LIKE"/>
    <property type="match status" value="1"/>
</dbReference>
<protein>
    <recommendedName>
        <fullName evidence="7">Protein OPAQUE1</fullName>
    </recommendedName>
    <alternativeName>
        <fullName evidence="8">Myosin XI motor protein</fullName>
    </alternativeName>
</protein>
<accession>K7U9N8</accession>
<accession>K7UKR6</accession>
<comment type="function">
    <text evidence="1 6">Myosin XI motor protein required for endoplasmic reticulum motility and protein body formation (PubMed:22892319). May function by binding with its tail domain to receptor proteins on membranes and exerting force with its N-terminal motor domain against actin filaments, thereby transporting its cargo along polarized actin cables (By similarity).</text>
</comment>
<comment type="subunit">
    <text evidence="6">Interacts (via C-terminus) with HIP (via C-terminus), but not with zeins, FL1 or intrinsic proteins of protein bodies.</text>
</comment>
<comment type="subcellular location">
    <subcellularLocation>
        <location evidence="6">Cytoplasm</location>
    </subcellularLocation>
    <text evidence="6">Associated with the endoplasmic reticulum membrane.</text>
</comment>
<comment type="alternative products">
    <event type="alternative splicing"/>
    <isoform>
        <id>K7U9N8-1</id>
        <name>1</name>
        <sequence type="displayed"/>
    </isoform>
    <isoform>
        <id>K7U9N8-2</id>
        <name>2</name>
        <sequence type="described" ref="VSP_058625"/>
    </isoform>
</comment>
<comment type="tissue specificity">
    <text evidence="6">High expression in kernels and stems, intermediate in ears and leaves, and low in roots, silks and tassels.</text>
</comment>
<comment type="developmental stage">
    <text evidence="6">Highly expressed in early developing kernels.</text>
</comment>
<comment type="domain">
    <text evidence="9">IQ domain mediates interaction with calmodulin.</text>
</comment>
<comment type="domain">
    <text evidence="9">The tail domain is a globular cargo-binding domain.</text>
</comment>
<comment type="disruption phenotype">
    <text evidence="6">Dilated endoplasmic reticulum, small and misshapen protein bodies, and opaque endosperm.</text>
</comment>
<comment type="similarity">
    <text evidence="8">Belongs to the TRAFAC class myosin-kinesin ATPase superfamily. Myosin family. Plant myosin class XI subfamily.</text>
</comment>
<name>OP1_MAIZE</name>
<sequence>MSYRKGLKVWVEEKGEGWVEAEVVEAKERAVVVFSSQRKKITVSPEKLLPRDTDEDLGGGHVDDMTKLTYLNEPGVLYNLKKRYALNEIYTYTGSILIAVNPFTRLPHLYNEYMMEQYKGIRLGELSPHVFAVADASYSRAMVNDSRSQSILVSGESGAGKTETTKLIMQYLTFVGGRAALDDRTVEQQVLESNPLLEAFGNAKTVRNDNSSRFGKFVEIQFDSSGRISGAAIRTYLLERSRVVQITDPERNFHCFYQLCASGKDAELYKLGHISSFHYLNQSNTHDLEGTNNEDEYWKTKRAMDIVGISREDQDAIFRTLAAILHLGNIEFVPGKDADSSKIKDSTSNFHLQTAAKLFMCDSDLLVSTLCSRSIHTREGIIVKALDCAAAAANRDALAKTVYARLFDWLVENINKSIGQDVDSKLQIGVLDIYGFESFKNNSFEQFCINFANEKLQQHFNEHVFKMEQEEYKSEEINWSYIEFIDNQDVLDLIEKKPIGIIALLDEACMFPKSTHETFATKMFRNFSSHLRLERTKFSETDFTISHYAGKVTYQTDSFLEKNRDYIVAEHCNLLSSSRCPFVSGLFTSLPEESIRSSYKFSSVASRFKLQLQALMETLNSTEPHYVRCVKPNSANRPQLFENQSVLHQLRCGGVLEAVRISLAGYPTRRTYAEFVDRFAVLVPELMIGSYDEKMMTKGILEKMKLENFQLGKTKVFLRAGQIAILDMRRAEILDNAARHIQGRFRTFITRKEFVKTREASISIQAYCRGCLARKMFANRRETAAAVIVQKYVRRWLLRRAHLQACLAALLIQSYIRGFIARRYFSVIREHKAATVIQSTWRRRKFVILFQNYRQATVAIQCSWRQKLARKELRKLKMAANEAGALREAKNKLEKKMDDLALRLTLERRLRASSEESKSVEILKRDKIIESLSAECAAAKSAAQNEHAKKLLLQKQLDDSLREITMLQSKKIMSAEAAEENSNLKNLVESLSTKNSILENELIVTRKSSDDTMEKLKEVEGKCNHLQQNLDKLQEKLTNLENENHVLRQKAFNMPTMNNLSVAPKTLSEKFSASIGLPNSEPKHIYESPTPTKYLASLPQTLSTSRRSRLPVERHEQNHEILLRCIKENLGYKDGKPVAACIIYKCLLHWRAFESERTAIFDHVIEAINDVLKGNEADGRLPYWLSNTSALLCLLQRNLRSNGLFTTPSRRSGGALGKIAQTLRSPSKFIGRSDTLPHVDARYPAILFKQQLTACVEKIFGQLRDNLKKEISPLLNVCIQAPKSTRGQSGKASKSSGVGAHPASNSNWDNIVNFLDLLMDTLRENYVPSFFIRKLITQLFSFINIQLFNSLLLRRECCTFSNGEYVKAGLSLLEKWITDVTDEFAGTSWHELNYIRQAVGFLVIHQKRKKTLEEIKQDLCPSLSVRQIYRICSMYWDDKYGTQGISTEVVAAMREMVNKDTQNLVSNSFLLDDDLSIPFSTEDLSMAIPSIDYADVDLPESLQHYTSVQFLLRQQDPQPAQ</sequence>
<keyword id="KW-0009">Actin-binding</keyword>
<keyword id="KW-0025">Alternative splicing</keyword>
<keyword id="KW-0067">ATP-binding</keyword>
<keyword id="KW-0112">Calmodulin-binding</keyword>
<keyword id="KW-0175">Coiled coil</keyword>
<keyword id="KW-0963">Cytoplasm</keyword>
<keyword id="KW-0505">Motor protein</keyword>
<keyword id="KW-0518">Myosin</keyword>
<keyword id="KW-0547">Nucleotide-binding</keyword>
<keyword id="KW-1185">Reference proteome</keyword>
<keyword id="KW-0677">Repeat</keyword>
<gene>
    <name evidence="7" type="primary">O1</name>
    <name evidence="10" type="ORF">ZEAMMB73_923224</name>
    <name type="ORF">Zm.5032</name>
</gene>
<organism evidence="10">
    <name type="scientific">Zea mays</name>
    <name type="common">Maize</name>
    <dbReference type="NCBI Taxonomy" id="4577"/>
    <lineage>
        <taxon>Eukaryota</taxon>
        <taxon>Viridiplantae</taxon>
        <taxon>Streptophyta</taxon>
        <taxon>Embryophyta</taxon>
        <taxon>Tracheophyta</taxon>
        <taxon>Spermatophyta</taxon>
        <taxon>Magnoliopsida</taxon>
        <taxon>Liliopsida</taxon>
        <taxon>Poales</taxon>
        <taxon>Poaceae</taxon>
        <taxon>PACMAD clade</taxon>
        <taxon>Panicoideae</taxon>
        <taxon>Andropogonodae</taxon>
        <taxon>Andropogoneae</taxon>
        <taxon>Tripsacinae</taxon>
        <taxon>Zea</taxon>
    </lineage>
</organism>
<feature type="chain" id="PRO_0000438210" description="Protein OPAQUE1">
    <location>
        <begin position="1"/>
        <end position="1521"/>
    </location>
</feature>
<feature type="domain" description="Myosin N-terminal SH3-like" evidence="5">
    <location>
        <begin position="4"/>
        <end position="53"/>
    </location>
</feature>
<feature type="domain" description="Myosin motor" evidence="4">
    <location>
        <begin position="60"/>
        <end position="731"/>
    </location>
</feature>
<feature type="domain" description="IQ 1" evidence="2">
    <location>
        <begin position="733"/>
        <end position="755"/>
    </location>
</feature>
<feature type="domain" description="IQ 2" evidence="2">
    <location>
        <begin position="756"/>
        <end position="778"/>
    </location>
</feature>
<feature type="domain" description="IQ 3" evidence="2">
    <location>
        <begin position="781"/>
        <end position="803"/>
    </location>
</feature>
<feature type="domain" description="IQ 4" evidence="2">
    <location>
        <begin position="804"/>
        <end position="826"/>
    </location>
</feature>
<feature type="domain" description="IQ 5" evidence="2">
    <location>
        <begin position="829"/>
        <end position="851"/>
    </location>
</feature>
<feature type="domain" description="IQ 6" evidence="2">
    <location>
        <begin position="852"/>
        <end position="874"/>
    </location>
</feature>
<feature type="domain" description="Dilute" evidence="3">
    <location>
        <begin position="1162"/>
        <end position="1459"/>
    </location>
</feature>
<feature type="region of interest" description="Actin-binding" evidence="2">
    <location>
        <begin position="493"/>
        <end position="527"/>
    </location>
</feature>
<feature type="region of interest" description="Actin-binding" evidence="2">
    <location>
        <begin position="529"/>
        <end position="552"/>
    </location>
</feature>
<feature type="region of interest" description="Actin-binding" evidence="2">
    <location>
        <begin position="587"/>
        <end position="612"/>
    </location>
</feature>
<feature type="region of interest" description="Actin-binding" evidence="2">
    <location>
        <begin position="612"/>
        <end position="634"/>
    </location>
</feature>
<feature type="coiled-coil region" evidence="2">
    <location>
        <begin position="870"/>
        <end position="910"/>
    </location>
</feature>
<feature type="coiled-coil region" evidence="2">
    <location>
        <begin position="974"/>
        <end position="1050"/>
    </location>
</feature>
<feature type="binding site" evidence="2">
    <location>
        <begin position="155"/>
        <end position="162"/>
    </location>
    <ligand>
        <name>ATP</name>
        <dbReference type="ChEBI" id="CHEBI:30616"/>
    </ligand>
</feature>
<feature type="binding site" evidence="2">
    <location>
        <begin position="208"/>
        <end position="216"/>
    </location>
    <ligand>
        <name>ATP</name>
        <dbReference type="ChEBI" id="CHEBI:30616"/>
    </ligand>
</feature>
<feature type="splice variant" id="VSP_058625" description="In isoform 2.">
    <location>
        <position position="139"/>
    </location>
</feature>
<reference key="1">
    <citation type="journal article" date="2009" name="Science">
        <title>The B73 maize genome: complexity, diversity, and dynamics.</title>
        <authorList>
            <person name="Schnable P.S."/>
            <person name="Ware D."/>
            <person name="Fulton R.S."/>
            <person name="Stein J.C."/>
            <person name="Wei F."/>
            <person name="Pasternak S."/>
            <person name="Liang C."/>
            <person name="Zhang J."/>
            <person name="Fulton L."/>
            <person name="Graves T.A."/>
            <person name="Minx P."/>
            <person name="Reily A.D."/>
            <person name="Courtney L."/>
            <person name="Kruchowski S.S."/>
            <person name="Tomlinson C."/>
            <person name="Strong C."/>
            <person name="Delehaunty K."/>
            <person name="Fronick C."/>
            <person name="Courtney B."/>
            <person name="Rock S.M."/>
            <person name="Belter E."/>
            <person name="Du F."/>
            <person name="Kim K."/>
            <person name="Abbott R.M."/>
            <person name="Cotton M."/>
            <person name="Levy A."/>
            <person name="Marchetto P."/>
            <person name="Ochoa K."/>
            <person name="Jackson S.M."/>
            <person name="Gillam B."/>
            <person name="Chen W."/>
            <person name="Yan L."/>
            <person name="Higginbotham J."/>
            <person name="Cardenas M."/>
            <person name="Waligorski J."/>
            <person name="Applebaum E."/>
            <person name="Phelps L."/>
            <person name="Falcone J."/>
            <person name="Kanchi K."/>
            <person name="Thane T."/>
            <person name="Scimone A."/>
            <person name="Thane N."/>
            <person name="Henke J."/>
            <person name="Wang T."/>
            <person name="Ruppert J."/>
            <person name="Shah N."/>
            <person name="Rotter K."/>
            <person name="Hodges J."/>
            <person name="Ingenthron E."/>
            <person name="Cordes M."/>
            <person name="Kohlberg S."/>
            <person name="Sgro J."/>
            <person name="Delgado B."/>
            <person name="Mead K."/>
            <person name="Chinwalla A."/>
            <person name="Leonard S."/>
            <person name="Crouse K."/>
            <person name="Collura K."/>
            <person name="Kudrna D."/>
            <person name="Currie J."/>
            <person name="He R."/>
            <person name="Angelova A."/>
            <person name="Rajasekar S."/>
            <person name="Mueller T."/>
            <person name="Lomeli R."/>
            <person name="Scara G."/>
            <person name="Ko A."/>
            <person name="Delaney K."/>
            <person name="Wissotski M."/>
            <person name="Lopez G."/>
            <person name="Campos D."/>
            <person name="Braidotti M."/>
            <person name="Ashley E."/>
            <person name="Golser W."/>
            <person name="Kim H."/>
            <person name="Lee S."/>
            <person name="Lin J."/>
            <person name="Dujmic Z."/>
            <person name="Kim W."/>
            <person name="Talag J."/>
            <person name="Zuccolo A."/>
            <person name="Fan C."/>
            <person name="Sebastian A."/>
            <person name="Kramer M."/>
            <person name="Spiegel L."/>
            <person name="Nascimento L."/>
            <person name="Zutavern T."/>
            <person name="Miller B."/>
            <person name="Ambroise C."/>
            <person name="Muller S."/>
            <person name="Spooner W."/>
            <person name="Narechania A."/>
            <person name="Ren L."/>
            <person name="Wei S."/>
            <person name="Kumari S."/>
            <person name="Faga B."/>
            <person name="Levy M.J."/>
            <person name="McMahan L."/>
            <person name="Van Buren P."/>
            <person name="Vaughn M.W."/>
            <person name="Ying K."/>
            <person name="Yeh C.-T."/>
            <person name="Emrich S.J."/>
            <person name="Jia Y."/>
            <person name="Kalyanaraman A."/>
            <person name="Hsia A.-P."/>
            <person name="Barbazuk W.B."/>
            <person name="Baucom R.S."/>
            <person name="Brutnell T.P."/>
            <person name="Carpita N.C."/>
            <person name="Chaparro C."/>
            <person name="Chia J.-M."/>
            <person name="Deragon J.-M."/>
            <person name="Estill J.C."/>
            <person name="Fu Y."/>
            <person name="Jeddeloh J.A."/>
            <person name="Han Y."/>
            <person name="Lee H."/>
            <person name="Li P."/>
            <person name="Lisch D.R."/>
            <person name="Liu S."/>
            <person name="Liu Z."/>
            <person name="Nagel D.H."/>
            <person name="McCann M.C."/>
            <person name="SanMiguel P."/>
            <person name="Myers A.M."/>
            <person name="Nettleton D."/>
            <person name="Nguyen J."/>
            <person name="Penning B.W."/>
            <person name="Ponnala L."/>
            <person name="Schneider K.L."/>
            <person name="Schwartz D.C."/>
            <person name="Sharma A."/>
            <person name="Soderlund C."/>
            <person name="Springer N.M."/>
            <person name="Sun Q."/>
            <person name="Wang H."/>
            <person name="Waterman M."/>
            <person name="Westerman R."/>
            <person name="Wolfgruber T.K."/>
            <person name="Yang L."/>
            <person name="Yu Y."/>
            <person name="Zhang L."/>
            <person name="Zhou S."/>
            <person name="Zhu Q."/>
            <person name="Bennetzen J.L."/>
            <person name="Dawe R.K."/>
            <person name="Jiang J."/>
            <person name="Jiang N."/>
            <person name="Presting G.G."/>
            <person name="Wessler S.R."/>
            <person name="Aluru S."/>
            <person name="Martienssen R.A."/>
            <person name="Clifton S.W."/>
            <person name="McCombie W.R."/>
            <person name="Wing R.A."/>
            <person name="Wilson R.K."/>
        </authorList>
    </citation>
    <scope>NUCLEOTIDE SEQUENCE [LARGE SCALE GENOMIC DNA]</scope>
    <source>
        <strain>cv. B73</strain>
    </source>
</reference>
<reference key="2">
    <citation type="journal article" date="2012" name="Plant Cell">
        <title>Opaque1 encodes a myosin XI motor protein that is required for endoplasmic reticulum motility and protein body formation in maize endosperm.</title>
        <authorList>
            <person name="Wang G."/>
            <person name="Wang F."/>
            <person name="Wang G."/>
            <person name="Wang F."/>
            <person name="Zhang X."/>
            <person name="Zhong M."/>
            <person name="Zhang J."/>
            <person name="Lin D."/>
            <person name="Tang Y."/>
            <person name="Xu Z."/>
            <person name="Song R."/>
        </authorList>
    </citation>
    <scope>FUNCTION</scope>
    <scope>TISSUE SPECIFICITY</scope>
    <scope>DEVELOPMENTAL STAGE</scope>
    <scope>SUBCELLULAR LOCATION</scope>
    <scope>INTERACTION WITH HIP</scope>
    <scope>LACK OF INTERACTION WITH ZEINS; FL1 AND PROTEIN BODIES PROTEINS</scope>
    <scope>DISRUPTION PHENOTYPE</scope>
</reference>
<proteinExistence type="evidence at protein level"/>